<name>FOLD_MYCA1</name>
<proteinExistence type="inferred from homology"/>
<accession>A0QKM1</accession>
<sequence length="281" mass="29553">MGAITLDGKATRDEIFVDLKQRVAALTAAGRTPGLGTILVGDDPGSQAYVRGKHADCAKVGITSIRRDLPADISTAALNDTIDELNANPECTGYIVQLPLPKQLDENAALERVDPDKDADGLHPTNLGRLVLNNPAPLPCTPRGIVHLLRRYDVEIAGAHVVVIGRGVTVGRPLGLLLTRRSENATVTLCHTGTRDLPALTRQADIVVAAVGVPHLLTADMVRPGAAVLDVGVSRVDGKLAGDVHPDVWEVAGHVSPNPGGVGPLTRAFLLTNVVELAERE</sequence>
<organism>
    <name type="scientific">Mycobacterium avium (strain 104)</name>
    <dbReference type="NCBI Taxonomy" id="243243"/>
    <lineage>
        <taxon>Bacteria</taxon>
        <taxon>Bacillati</taxon>
        <taxon>Actinomycetota</taxon>
        <taxon>Actinomycetes</taxon>
        <taxon>Mycobacteriales</taxon>
        <taxon>Mycobacteriaceae</taxon>
        <taxon>Mycobacterium</taxon>
        <taxon>Mycobacterium avium complex (MAC)</taxon>
    </lineage>
</organism>
<feature type="chain" id="PRO_0000305842" description="Bifunctional protein FolD">
    <location>
        <begin position="1"/>
        <end position="281"/>
    </location>
</feature>
<feature type="binding site" evidence="1">
    <location>
        <begin position="165"/>
        <end position="167"/>
    </location>
    <ligand>
        <name>NADP(+)</name>
        <dbReference type="ChEBI" id="CHEBI:58349"/>
    </ligand>
</feature>
<feature type="binding site" evidence="1">
    <location>
        <position position="192"/>
    </location>
    <ligand>
        <name>NADP(+)</name>
        <dbReference type="ChEBI" id="CHEBI:58349"/>
    </ligand>
</feature>
<feature type="binding site" evidence="1">
    <location>
        <position position="233"/>
    </location>
    <ligand>
        <name>NADP(+)</name>
        <dbReference type="ChEBI" id="CHEBI:58349"/>
    </ligand>
</feature>
<keyword id="KW-0028">Amino-acid biosynthesis</keyword>
<keyword id="KW-0368">Histidine biosynthesis</keyword>
<keyword id="KW-0378">Hydrolase</keyword>
<keyword id="KW-0486">Methionine biosynthesis</keyword>
<keyword id="KW-0511">Multifunctional enzyme</keyword>
<keyword id="KW-0521">NADP</keyword>
<keyword id="KW-0554">One-carbon metabolism</keyword>
<keyword id="KW-0560">Oxidoreductase</keyword>
<keyword id="KW-0658">Purine biosynthesis</keyword>
<dbReference type="EC" id="1.5.1.5" evidence="1"/>
<dbReference type="EC" id="3.5.4.9" evidence="1"/>
<dbReference type="EMBL" id="CP000479">
    <property type="protein sequence ID" value="ABK67194.1"/>
    <property type="molecule type" value="Genomic_DNA"/>
</dbReference>
<dbReference type="RefSeq" id="WP_011726002.1">
    <property type="nucleotide sequence ID" value="NC_008595.1"/>
</dbReference>
<dbReference type="SMR" id="A0QKM1"/>
<dbReference type="KEGG" id="mav:MAV_4323"/>
<dbReference type="HOGENOM" id="CLU_034045_2_1_11"/>
<dbReference type="UniPathway" id="UPA00193"/>
<dbReference type="Proteomes" id="UP000001574">
    <property type="component" value="Chromosome"/>
</dbReference>
<dbReference type="GO" id="GO:0005829">
    <property type="term" value="C:cytosol"/>
    <property type="evidence" value="ECO:0007669"/>
    <property type="project" value="TreeGrafter"/>
</dbReference>
<dbReference type="GO" id="GO:0004477">
    <property type="term" value="F:methenyltetrahydrofolate cyclohydrolase activity"/>
    <property type="evidence" value="ECO:0007669"/>
    <property type="project" value="UniProtKB-UniRule"/>
</dbReference>
<dbReference type="GO" id="GO:0004488">
    <property type="term" value="F:methylenetetrahydrofolate dehydrogenase (NADP+) activity"/>
    <property type="evidence" value="ECO:0007669"/>
    <property type="project" value="UniProtKB-UniRule"/>
</dbReference>
<dbReference type="GO" id="GO:0000105">
    <property type="term" value="P:L-histidine biosynthetic process"/>
    <property type="evidence" value="ECO:0007669"/>
    <property type="project" value="UniProtKB-KW"/>
</dbReference>
<dbReference type="GO" id="GO:0009086">
    <property type="term" value="P:methionine biosynthetic process"/>
    <property type="evidence" value="ECO:0007669"/>
    <property type="project" value="UniProtKB-KW"/>
</dbReference>
<dbReference type="GO" id="GO:0006164">
    <property type="term" value="P:purine nucleotide biosynthetic process"/>
    <property type="evidence" value="ECO:0007669"/>
    <property type="project" value="UniProtKB-KW"/>
</dbReference>
<dbReference type="GO" id="GO:0035999">
    <property type="term" value="P:tetrahydrofolate interconversion"/>
    <property type="evidence" value="ECO:0007669"/>
    <property type="project" value="UniProtKB-UniRule"/>
</dbReference>
<dbReference type="CDD" id="cd01080">
    <property type="entry name" value="NAD_bind_m-THF_DH_Cyclohyd"/>
    <property type="match status" value="1"/>
</dbReference>
<dbReference type="FunFam" id="3.40.50.720:FF:000094">
    <property type="entry name" value="Bifunctional protein FolD"/>
    <property type="match status" value="1"/>
</dbReference>
<dbReference type="FunFam" id="3.40.50.10860:FF:000005">
    <property type="entry name" value="C-1-tetrahydrofolate synthase, cytoplasmic, putative"/>
    <property type="match status" value="1"/>
</dbReference>
<dbReference type="Gene3D" id="3.40.50.10860">
    <property type="entry name" value="Leucine Dehydrogenase, chain A, domain 1"/>
    <property type="match status" value="1"/>
</dbReference>
<dbReference type="Gene3D" id="3.40.50.720">
    <property type="entry name" value="NAD(P)-binding Rossmann-like Domain"/>
    <property type="match status" value="1"/>
</dbReference>
<dbReference type="HAMAP" id="MF_01576">
    <property type="entry name" value="THF_DHG_CYH"/>
    <property type="match status" value="1"/>
</dbReference>
<dbReference type="InterPro" id="IPR046346">
    <property type="entry name" value="Aminoacid_DH-like_N_sf"/>
</dbReference>
<dbReference type="InterPro" id="IPR036291">
    <property type="entry name" value="NAD(P)-bd_dom_sf"/>
</dbReference>
<dbReference type="InterPro" id="IPR000672">
    <property type="entry name" value="THF_DH/CycHdrlase"/>
</dbReference>
<dbReference type="InterPro" id="IPR020630">
    <property type="entry name" value="THF_DH/CycHdrlase_cat_dom"/>
</dbReference>
<dbReference type="InterPro" id="IPR020631">
    <property type="entry name" value="THF_DH/CycHdrlase_NAD-bd_dom"/>
</dbReference>
<dbReference type="NCBIfam" id="NF010789">
    <property type="entry name" value="PRK14193.1"/>
    <property type="match status" value="1"/>
</dbReference>
<dbReference type="PANTHER" id="PTHR48099:SF5">
    <property type="entry name" value="C-1-TETRAHYDROFOLATE SYNTHASE, CYTOPLASMIC"/>
    <property type="match status" value="1"/>
</dbReference>
<dbReference type="PANTHER" id="PTHR48099">
    <property type="entry name" value="C-1-TETRAHYDROFOLATE SYNTHASE, CYTOPLASMIC-RELATED"/>
    <property type="match status" value="1"/>
</dbReference>
<dbReference type="Pfam" id="PF00763">
    <property type="entry name" value="THF_DHG_CYH"/>
    <property type="match status" value="1"/>
</dbReference>
<dbReference type="Pfam" id="PF02882">
    <property type="entry name" value="THF_DHG_CYH_C"/>
    <property type="match status" value="1"/>
</dbReference>
<dbReference type="PRINTS" id="PR00085">
    <property type="entry name" value="THFDHDRGNASE"/>
</dbReference>
<dbReference type="SUPFAM" id="SSF53223">
    <property type="entry name" value="Aminoacid dehydrogenase-like, N-terminal domain"/>
    <property type="match status" value="1"/>
</dbReference>
<dbReference type="SUPFAM" id="SSF51735">
    <property type="entry name" value="NAD(P)-binding Rossmann-fold domains"/>
    <property type="match status" value="1"/>
</dbReference>
<comment type="function">
    <text evidence="1">Catalyzes the oxidation of 5,10-methylenetetrahydrofolate to 5,10-methenyltetrahydrofolate and then the hydrolysis of 5,10-methenyltetrahydrofolate to 10-formyltetrahydrofolate.</text>
</comment>
<comment type="catalytic activity">
    <reaction evidence="1">
        <text>(6R)-5,10-methylene-5,6,7,8-tetrahydrofolate + NADP(+) = (6R)-5,10-methenyltetrahydrofolate + NADPH</text>
        <dbReference type="Rhea" id="RHEA:22812"/>
        <dbReference type="ChEBI" id="CHEBI:15636"/>
        <dbReference type="ChEBI" id="CHEBI:57455"/>
        <dbReference type="ChEBI" id="CHEBI:57783"/>
        <dbReference type="ChEBI" id="CHEBI:58349"/>
        <dbReference type="EC" id="1.5.1.5"/>
    </reaction>
</comment>
<comment type="catalytic activity">
    <reaction evidence="1">
        <text>(6R)-5,10-methenyltetrahydrofolate + H2O = (6R)-10-formyltetrahydrofolate + H(+)</text>
        <dbReference type="Rhea" id="RHEA:23700"/>
        <dbReference type="ChEBI" id="CHEBI:15377"/>
        <dbReference type="ChEBI" id="CHEBI:15378"/>
        <dbReference type="ChEBI" id="CHEBI:57455"/>
        <dbReference type="ChEBI" id="CHEBI:195366"/>
        <dbReference type="EC" id="3.5.4.9"/>
    </reaction>
</comment>
<comment type="pathway">
    <text evidence="1">One-carbon metabolism; tetrahydrofolate interconversion.</text>
</comment>
<comment type="subunit">
    <text evidence="1">Homodimer.</text>
</comment>
<comment type="similarity">
    <text evidence="1">Belongs to the tetrahydrofolate dehydrogenase/cyclohydrolase family.</text>
</comment>
<reference key="1">
    <citation type="submission" date="2006-10" db="EMBL/GenBank/DDBJ databases">
        <authorList>
            <person name="Fleischmann R.D."/>
            <person name="Dodson R.J."/>
            <person name="Haft D.H."/>
            <person name="Merkel J.S."/>
            <person name="Nelson W.C."/>
            <person name="Fraser C.M."/>
        </authorList>
    </citation>
    <scope>NUCLEOTIDE SEQUENCE [LARGE SCALE GENOMIC DNA]</scope>
    <source>
        <strain>104</strain>
    </source>
</reference>
<gene>
    <name evidence="1" type="primary">folD</name>
    <name type="ordered locus">MAV_4323</name>
</gene>
<protein>
    <recommendedName>
        <fullName evidence="1">Bifunctional protein FolD</fullName>
    </recommendedName>
    <domain>
        <recommendedName>
            <fullName evidence="1">Methylenetetrahydrofolate dehydrogenase</fullName>
            <ecNumber evidence="1">1.5.1.5</ecNumber>
        </recommendedName>
    </domain>
    <domain>
        <recommendedName>
            <fullName evidence="1">Methenyltetrahydrofolate cyclohydrolase</fullName>
            <ecNumber evidence="1">3.5.4.9</ecNumber>
        </recommendedName>
    </domain>
</protein>
<evidence type="ECO:0000255" key="1">
    <source>
        <dbReference type="HAMAP-Rule" id="MF_01576"/>
    </source>
</evidence>